<sequence length="818" mass="93946">MTDTRRRVKVYTLNEDRQWDDRGTGHVSSGYVERFKGTSLLVRAESDGSLLLESKINPNTAYQKQQDTLIVWSEAENYDLALSFQEKAGCDEIWEKICQVQGKDPSVDITQDVVDESEDERFDDMSSPGLELPPCELNRLEDLAELVASSLPSPLRREKLALAVENEGYIRKLLDLFHVCEDLENREGLHHIYEIIKGIFLLNRTALFEVMFSDECIMDVIGCLEFDPALPQPRRHREFLTKTAHFKEVIPISDPELRQKIHQTYRVQYIQDMVLPTPSVFEENMLSTLHSFIFFNKVEIVGMLQDDEKFLTDLFAQLTDEATDDDKRHELVNFLKEFCAFSQTLQPQNRDAFFKTLSNMGILPALEVILGMDDVQVRAAATDIFSYLVEYNPSMVREFVMQESQQNDDDILLINLIIEHMICDTDPELGGAVQLISLLRTLVDPENMLATANKTEKTEFLSFFYKHCMHVLSAPLLANTTEDKPSKDDFQTSQLLALILELLTFCVEHHTYHIKNYIINKDILRRVLVLTASKHAFLALCALRFMRRIIGLKDEFYNRYIMRNFLFEPVIKAFLNNGSRYNLMNSAIIEMFEYVRVEDVKSLTAHIVENYWKALEDVDYVQTFKGLKLRYEQQRERQDNPKLDSMRSILRNHRFRRDARTLEDEEEMWFNTDEDDLEDGETVVRTSDKIKTEEDLMEPISKFMERKKLKEPEDKEILAKSSFSGRQNPSFKLAFSGSTKTSLSSPPPSASLSPGSPGSPGSPGSGARSSPSNTSVTTKGGLVGLVDYPDDDEEEEDDDDEESKEEPLPPSKKSRLSS</sequence>
<name>PP4R3_TETNG</name>
<comment type="function">
    <text evidence="1">Regulatory subunit of serine/threonine-protein phosphatase 4.</text>
</comment>
<comment type="subunit">
    <text evidence="1">Serine/threonine-protein phosphatase 4 (PP4) occurs in different assemblies of the catalytic and one or more regulatory subunits.</text>
</comment>
<comment type="similarity">
    <text evidence="3">Belongs to the SMEK family.</text>
</comment>
<reference key="1">
    <citation type="journal article" date="2004" name="Nature">
        <title>Genome duplication in the teleost fish Tetraodon nigroviridis reveals the early vertebrate proto-karyotype.</title>
        <authorList>
            <person name="Jaillon O."/>
            <person name="Aury J.-M."/>
            <person name="Brunet F."/>
            <person name="Petit J.-L."/>
            <person name="Stange-Thomann N."/>
            <person name="Mauceli E."/>
            <person name="Bouneau L."/>
            <person name="Fischer C."/>
            <person name="Ozouf-Costaz C."/>
            <person name="Bernot A."/>
            <person name="Nicaud S."/>
            <person name="Jaffe D."/>
            <person name="Fisher S."/>
            <person name="Lutfalla G."/>
            <person name="Dossat C."/>
            <person name="Segurens B."/>
            <person name="Dasilva C."/>
            <person name="Salanoubat M."/>
            <person name="Levy M."/>
            <person name="Boudet N."/>
            <person name="Castellano S."/>
            <person name="Anthouard V."/>
            <person name="Jubin C."/>
            <person name="Castelli V."/>
            <person name="Katinka M."/>
            <person name="Vacherie B."/>
            <person name="Biemont C."/>
            <person name="Skalli Z."/>
            <person name="Cattolico L."/>
            <person name="Poulain J."/>
            <person name="De Berardinis V."/>
            <person name="Cruaud C."/>
            <person name="Duprat S."/>
            <person name="Brottier P."/>
            <person name="Coutanceau J.-P."/>
            <person name="Gouzy J."/>
            <person name="Parra G."/>
            <person name="Lardier G."/>
            <person name="Chapple C."/>
            <person name="McKernan K.J."/>
            <person name="McEwan P."/>
            <person name="Bosak S."/>
            <person name="Kellis M."/>
            <person name="Volff J.-N."/>
            <person name="Guigo R."/>
            <person name="Zody M.C."/>
            <person name="Mesirov J."/>
            <person name="Lindblad-Toh K."/>
            <person name="Birren B."/>
            <person name="Nusbaum C."/>
            <person name="Kahn D."/>
            <person name="Robinson-Rechavi M."/>
            <person name="Laudet V."/>
            <person name="Schachter V."/>
            <person name="Quetier F."/>
            <person name="Saurin W."/>
            <person name="Scarpelli C."/>
            <person name="Wincker P."/>
            <person name="Lander E.S."/>
            <person name="Weissenbach J."/>
            <person name="Roest Crollius H."/>
        </authorList>
    </citation>
    <scope>NUCLEOTIDE SEQUENCE [LARGE SCALE GENOMIC DNA]</scope>
</reference>
<feature type="chain" id="PRO_0000254601" description="Serine/threonine-protein phosphatase 4 regulatory subunit 3">
    <location>
        <begin position="1"/>
        <end position="818"/>
    </location>
</feature>
<feature type="domain" description="WH1">
    <location>
        <begin position="1"/>
        <end position="100"/>
    </location>
</feature>
<feature type="region of interest" description="Disordered" evidence="2">
    <location>
        <begin position="718"/>
        <end position="818"/>
    </location>
</feature>
<feature type="compositionally biased region" description="Polar residues" evidence="2">
    <location>
        <begin position="721"/>
        <end position="730"/>
    </location>
</feature>
<feature type="compositionally biased region" description="Low complexity" evidence="2">
    <location>
        <begin position="736"/>
        <end position="756"/>
    </location>
</feature>
<feature type="compositionally biased region" description="Acidic residues" evidence="2">
    <location>
        <begin position="788"/>
        <end position="804"/>
    </location>
</feature>
<evidence type="ECO:0000250" key="1"/>
<evidence type="ECO:0000256" key="2">
    <source>
        <dbReference type="SAM" id="MobiDB-lite"/>
    </source>
</evidence>
<evidence type="ECO:0000305" key="3"/>
<proteinExistence type="inferred from homology"/>
<accession>Q4S6U8</accession>
<protein>
    <recommendedName>
        <fullName>Serine/threonine-protein phosphatase 4 regulatory subunit 3</fullName>
    </recommendedName>
    <alternativeName>
        <fullName>SMEK homolog 1</fullName>
    </alternativeName>
</protein>
<dbReference type="EMBL" id="CAAE01014723">
    <property type="protein sequence ID" value="CAG03634.1"/>
    <property type="molecule type" value="Genomic_DNA"/>
</dbReference>
<dbReference type="FunCoup" id="Q4S6U8">
    <property type="interactions" value="2150"/>
</dbReference>
<dbReference type="STRING" id="99883.ENSTNIP00000015261"/>
<dbReference type="KEGG" id="tng:GSTEN00023117G001"/>
<dbReference type="InParanoid" id="Q4S6U8"/>
<dbReference type="OrthoDB" id="27483at2759"/>
<dbReference type="Proteomes" id="UP000007303">
    <property type="component" value="Unassembled WGS sequence"/>
</dbReference>
<dbReference type="GO" id="GO:0005654">
    <property type="term" value="C:nucleoplasm"/>
    <property type="evidence" value="ECO:0007669"/>
    <property type="project" value="TreeGrafter"/>
</dbReference>
<dbReference type="GO" id="GO:0030289">
    <property type="term" value="C:protein phosphatase 4 complex"/>
    <property type="evidence" value="ECO:0007669"/>
    <property type="project" value="TreeGrafter"/>
</dbReference>
<dbReference type="GO" id="GO:0072542">
    <property type="term" value="F:protein phosphatase activator activity"/>
    <property type="evidence" value="ECO:0007669"/>
    <property type="project" value="TreeGrafter"/>
</dbReference>
<dbReference type="GO" id="GO:0006974">
    <property type="term" value="P:DNA damage response"/>
    <property type="evidence" value="ECO:0007669"/>
    <property type="project" value="TreeGrafter"/>
</dbReference>
<dbReference type="FunFam" id="2.30.29.30:FF:000051">
    <property type="entry name" value="Serine/threonine-protein phosphatase 4 regulatory subunit 3B"/>
    <property type="match status" value="1"/>
</dbReference>
<dbReference type="Gene3D" id="1.25.10.10">
    <property type="entry name" value="Leucine-rich Repeat Variant"/>
    <property type="match status" value="1"/>
</dbReference>
<dbReference type="Gene3D" id="2.30.29.30">
    <property type="entry name" value="Pleckstrin-homology domain (PH domain)/Phosphotyrosine-binding domain (PTB)"/>
    <property type="match status" value="1"/>
</dbReference>
<dbReference type="InterPro" id="IPR011989">
    <property type="entry name" value="ARM-like"/>
</dbReference>
<dbReference type="InterPro" id="IPR016024">
    <property type="entry name" value="ARM-type_fold"/>
</dbReference>
<dbReference type="InterPro" id="IPR055236">
    <property type="entry name" value="EVH1_PP4R3"/>
</dbReference>
<dbReference type="InterPro" id="IPR006887">
    <property type="entry name" value="P4R3-like_central_dom"/>
</dbReference>
<dbReference type="InterPro" id="IPR011993">
    <property type="entry name" value="PH-like_dom_sf"/>
</dbReference>
<dbReference type="InterPro" id="IPR051137">
    <property type="entry name" value="PP4R3-like"/>
</dbReference>
<dbReference type="PANTHER" id="PTHR23318">
    <property type="entry name" value="ATP SYNTHASE GAMMA-RELATED"/>
    <property type="match status" value="1"/>
</dbReference>
<dbReference type="PANTHER" id="PTHR23318:SF3">
    <property type="entry name" value="SERINE_THREONINE-PROTEIN PHOSPHATASE 4 REGULATORY SUBUNIT 3A"/>
    <property type="match status" value="1"/>
</dbReference>
<dbReference type="Pfam" id="PF22972">
    <property type="entry name" value="EVH1_PP4R3"/>
    <property type="match status" value="1"/>
</dbReference>
<dbReference type="Pfam" id="PF04802">
    <property type="entry name" value="PP4R3"/>
    <property type="match status" value="1"/>
</dbReference>
<dbReference type="SUPFAM" id="SSF48371">
    <property type="entry name" value="ARM repeat"/>
    <property type="match status" value="1"/>
</dbReference>
<dbReference type="SUPFAM" id="SSF50729">
    <property type="entry name" value="PH domain-like"/>
    <property type="match status" value="1"/>
</dbReference>
<keyword id="KW-1185">Reference proteome</keyword>
<gene>
    <name type="primary">smek1</name>
    <name type="ORF">GSTENG00023117001</name>
</gene>
<organism>
    <name type="scientific">Tetraodon nigroviridis</name>
    <name type="common">Spotted green pufferfish</name>
    <name type="synonym">Chelonodon nigroviridis</name>
    <dbReference type="NCBI Taxonomy" id="99883"/>
    <lineage>
        <taxon>Eukaryota</taxon>
        <taxon>Metazoa</taxon>
        <taxon>Chordata</taxon>
        <taxon>Craniata</taxon>
        <taxon>Vertebrata</taxon>
        <taxon>Euteleostomi</taxon>
        <taxon>Actinopterygii</taxon>
        <taxon>Neopterygii</taxon>
        <taxon>Teleostei</taxon>
        <taxon>Neoteleostei</taxon>
        <taxon>Acanthomorphata</taxon>
        <taxon>Eupercaria</taxon>
        <taxon>Tetraodontiformes</taxon>
        <taxon>Tetradontoidea</taxon>
        <taxon>Tetraodontidae</taxon>
        <taxon>Tetraodon</taxon>
    </lineage>
</organism>